<proteinExistence type="evidence at protein level"/>
<gene>
    <name evidence="2" type="primary">CRB3</name>
</gene>
<protein>
    <recommendedName>
        <fullName evidence="7">Protein crumbs homolog 3</fullName>
    </recommendedName>
</protein>
<organism evidence="8">
    <name type="scientific">Canis lupus familiaris</name>
    <name type="common">Dog</name>
    <name type="synonym">Canis familiaris</name>
    <dbReference type="NCBI Taxonomy" id="9615"/>
    <lineage>
        <taxon>Eukaryota</taxon>
        <taxon>Metazoa</taxon>
        <taxon>Chordata</taxon>
        <taxon>Craniata</taxon>
        <taxon>Vertebrata</taxon>
        <taxon>Euteleostomi</taxon>
        <taxon>Mammalia</taxon>
        <taxon>Eutheria</taxon>
        <taxon>Laurasiatheria</taxon>
        <taxon>Carnivora</taxon>
        <taxon>Caniformia</taxon>
        <taxon>Canidae</taxon>
        <taxon>Canis</taxon>
    </lineage>
</organism>
<reference evidence="8" key="1">
    <citation type="journal article" date="2005" name="Nature">
        <title>Genome sequence, comparative analysis and haplotype structure of the domestic dog.</title>
        <authorList>
            <person name="Lindblad-Toh K."/>
            <person name="Wade C.M."/>
            <person name="Mikkelsen T.S."/>
            <person name="Karlsson E.K."/>
            <person name="Jaffe D.B."/>
            <person name="Kamal M."/>
            <person name="Clamp M."/>
            <person name="Chang J.L."/>
            <person name="Kulbokas E.J. III"/>
            <person name="Zody M.C."/>
            <person name="Mauceli E."/>
            <person name="Xie X."/>
            <person name="Breen M."/>
            <person name="Wayne R.K."/>
            <person name="Ostrander E.A."/>
            <person name="Ponting C.P."/>
            <person name="Galibert F."/>
            <person name="Smith D.R."/>
            <person name="deJong P.J."/>
            <person name="Kirkness E.F."/>
            <person name="Alvarez P."/>
            <person name="Biagi T."/>
            <person name="Brockman W."/>
            <person name="Butler J."/>
            <person name="Chin C.-W."/>
            <person name="Cook A."/>
            <person name="Cuff J."/>
            <person name="Daly M.J."/>
            <person name="DeCaprio D."/>
            <person name="Gnerre S."/>
            <person name="Grabherr M."/>
            <person name="Kellis M."/>
            <person name="Kleber M."/>
            <person name="Bardeleben C."/>
            <person name="Goodstadt L."/>
            <person name="Heger A."/>
            <person name="Hitte C."/>
            <person name="Kim L."/>
            <person name="Koepfli K.-P."/>
            <person name="Parker H.G."/>
            <person name="Pollinger J.P."/>
            <person name="Searle S.M.J."/>
            <person name="Sutter N.B."/>
            <person name="Thomas R."/>
            <person name="Webber C."/>
            <person name="Baldwin J."/>
            <person name="Abebe A."/>
            <person name="Abouelleil A."/>
            <person name="Aftuck L."/>
            <person name="Ait-Zahra M."/>
            <person name="Aldredge T."/>
            <person name="Allen N."/>
            <person name="An P."/>
            <person name="Anderson S."/>
            <person name="Antoine C."/>
            <person name="Arachchi H."/>
            <person name="Aslam A."/>
            <person name="Ayotte L."/>
            <person name="Bachantsang P."/>
            <person name="Barry A."/>
            <person name="Bayul T."/>
            <person name="Benamara M."/>
            <person name="Berlin A."/>
            <person name="Bessette D."/>
            <person name="Blitshteyn B."/>
            <person name="Bloom T."/>
            <person name="Blye J."/>
            <person name="Boguslavskiy L."/>
            <person name="Bonnet C."/>
            <person name="Boukhgalter B."/>
            <person name="Brown A."/>
            <person name="Cahill P."/>
            <person name="Calixte N."/>
            <person name="Camarata J."/>
            <person name="Cheshatsang Y."/>
            <person name="Chu J."/>
            <person name="Citroen M."/>
            <person name="Collymore A."/>
            <person name="Cooke P."/>
            <person name="Dawoe T."/>
            <person name="Daza R."/>
            <person name="Decktor K."/>
            <person name="DeGray S."/>
            <person name="Dhargay N."/>
            <person name="Dooley K."/>
            <person name="Dooley K."/>
            <person name="Dorje P."/>
            <person name="Dorjee K."/>
            <person name="Dorris L."/>
            <person name="Duffey N."/>
            <person name="Dupes A."/>
            <person name="Egbiremolen O."/>
            <person name="Elong R."/>
            <person name="Falk J."/>
            <person name="Farina A."/>
            <person name="Faro S."/>
            <person name="Ferguson D."/>
            <person name="Ferreira P."/>
            <person name="Fisher S."/>
            <person name="FitzGerald M."/>
            <person name="Foley K."/>
            <person name="Foley C."/>
            <person name="Franke A."/>
            <person name="Friedrich D."/>
            <person name="Gage D."/>
            <person name="Garber M."/>
            <person name="Gearin G."/>
            <person name="Giannoukos G."/>
            <person name="Goode T."/>
            <person name="Goyette A."/>
            <person name="Graham J."/>
            <person name="Grandbois E."/>
            <person name="Gyaltsen K."/>
            <person name="Hafez N."/>
            <person name="Hagopian D."/>
            <person name="Hagos B."/>
            <person name="Hall J."/>
            <person name="Healy C."/>
            <person name="Hegarty R."/>
            <person name="Honan T."/>
            <person name="Horn A."/>
            <person name="Houde N."/>
            <person name="Hughes L."/>
            <person name="Hunnicutt L."/>
            <person name="Husby M."/>
            <person name="Jester B."/>
            <person name="Jones C."/>
            <person name="Kamat A."/>
            <person name="Kanga B."/>
            <person name="Kells C."/>
            <person name="Khazanovich D."/>
            <person name="Kieu A.C."/>
            <person name="Kisner P."/>
            <person name="Kumar M."/>
            <person name="Lance K."/>
            <person name="Landers T."/>
            <person name="Lara M."/>
            <person name="Lee W."/>
            <person name="Leger J.-P."/>
            <person name="Lennon N."/>
            <person name="Leuper L."/>
            <person name="LeVine S."/>
            <person name="Liu J."/>
            <person name="Liu X."/>
            <person name="Lokyitsang Y."/>
            <person name="Lokyitsang T."/>
            <person name="Lui A."/>
            <person name="Macdonald J."/>
            <person name="Major J."/>
            <person name="Marabella R."/>
            <person name="Maru K."/>
            <person name="Matthews C."/>
            <person name="McDonough S."/>
            <person name="Mehta T."/>
            <person name="Meldrim J."/>
            <person name="Melnikov A."/>
            <person name="Meneus L."/>
            <person name="Mihalev A."/>
            <person name="Mihova T."/>
            <person name="Miller K."/>
            <person name="Mittelman R."/>
            <person name="Mlenga V."/>
            <person name="Mulrain L."/>
            <person name="Munson G."/>
            <person name="Navidi A."/>
            <person name="Naylor J."/>
            <person name="Nguyen T."/>
            <person name="Nguyen N."/>
            <person name="Nguyen C."/>
            <person name="Nguyen T."/>
            <person name="Nicol R."/>
            <person name="Norbu N."/>
            <person name="Norbu C."/>
            <person name="Novod N."/>
            <person name="Nyima T."/>
            <person name="Olandt P."/>
            <person name="O'Neill B."/>
            <person name="O'Neill K."/>
            <person name="Osman S."/>
            <person name="Oyono L."/>
            <person name="Patti C."/>
            <person name="Perrin D."/>
            <person name="Phunkhang P."/>
            <person name="Pierre F."/>
            <person name="Priest M."/>
            <person name="Rachupka A."/>
            <person name="Raghuraman S."/>
            <person name="Rameau R."/>
            <person name="Ray V."/>
            <person name="Raymond C."/>
            <person name="Rege F."/>
            <person name="Rise C."/>
            <person name="Rogers J."/>
            <person name="Rogov P."/>
            <person name="Sahalie J."/>
            <person name="Settipalli S."/>
            <person name="Sharpe T."/>
            <person name="Shea T."/>
            <person name="Sheehan M."/>
            <person name="Sherpa N."/>
            <person name="Shi J."/>
            <person name="Shih D."/>
            <person name="Sloan J."/>
            <person name="Smith C."/>
            <person name="Sparrow T."/>
            <person name="Stalker J."/>
            <person name="Stange-Thomann N."/>
            <person name="Stavropoulos S."/>
            <person name="Stone C."/>
            <person name="Stone S."/>
            <person name="Sykes S."/>
            <person name="Tchuinga P."/>
            <person name="Tenzing P."/>
            <person name="Tesfaye S."/>
            <person name="Thoulutsang D."/>
            <person name="Thoulutsang Y."/>
            <person name="Topham K."/>
            <person name="Topping I."/>
            <person name="Tsamla T."/>
            <person name="Vassiliev H."/>
            <person name="Venkataraman V."/>
            <person name="Vo A."/>
            <person name="Wangchuk T."/>
            <person name="Wangdi T."/>
            <person name="Weiand M."/>
            <person name="Wilkinson J."/>
            <person name="Wilson A."/>
            <person name="Yadav S."/>
            <person name="Yang S."/>
            <person name="Yang X."/>
            <person name="Young G."/>
            <person name="Yu Q."/>
            <person name="Zainoun J."/>
            <person name="Zembek L."/>
            <person name="Zimmer A."/>
            <person name="Lander E.S."/>
        </authorList>
    </citation>
    <scope>NUCLEOTIDE SEQUENCE [LARGE SCALE GENOMIC DNA]</scope>
    <source>
        <strain evidence="8">Boxer</strain>
    </source>
</reference>
<reference evidence="7" key="2">
    <citation type="journal article" date="2003" name="Gene">
        <title>Mammalian Crumbs3 is a small transmembrane protein linked to protein associated with Lin-7 (Pals1).</title>
        <authorList>
            <person name="Makarova O."/>
            <person name="Roh M.H."/>
            <person name="Liu C.-J."/>
            <person name="Laurinec S."/>
            <person name="Margolis B."/>
        </authorList>
    </citation>
    <scope>IDENTIFICATION IN A COMPLEX WITH PALS1 AND PATJ</scope>
    <scope>SUBCELLULAR LOCATION</scope>
</reference>
<reference evidence="7" key="3">
    <citation type="journal article" date="2003" name="J. Cell Sci.">
        <title>The Crumbs3-Pals1 complex participates in the establishment of polarity in mammalian epithelial cells.</title>
        <authorList>
            <person name="Roh M.H."/>
            <person name="Fan S."/>
            <person name="Liu C.-J."/>
            <person name="Margolis B."/>
        </authorList>
    </citation>
    <scope>SUBCELLULAR LOCATION</scope>
</reference>
<name>CRUM3_CANLF</name>
<dbReference type="EMBL" id="AAEX03012494">
    <property type="status" value="NOT_ANNOTATED_CDS"/>
    <property type="molecule type" value="Genomic_DNA"/>
</dbReference>
<dbReference type="RefSeq" id="XP_005633034.1">
    <property type="nucleotide sequence ID" value="XM_005632977.4"/>
</dbReference>
<dbReference type="RefSeq" id="XP_013977398.1">
    <property type="nucleotide sequence ID" value="XM_014121923.2"/>
</dbReference>
<dbReference type="RefSeq" id="XP_013977399.1">
    <property type="nucleotide sequence ID" value="XM_014121924.3"/>
</dbReference>
<dbReference type="RefSeq" id="XP_038284795.1">
    <property type="nucleotide sequence ID" value="XM_038428867.1"/>
</dbReference>
<dbReference type="RefSeq" id="XP_038284796.1">
    <property type="nucleotide sequence ID" value="XM_038428868.1"/>
</dbReference>
<dbReference type="RefSeq" id="XP_038284797.1">
    <property type="nucleotide sequence ID" value="XM_038428869.1"/>
</dbReference>
<dbReference type="RefSeq" id="XP_038284798.1">
    <property type="nucleotide sequence ID" value="XM_038428870.1"/>
</dbReference>
<dbReference type="RefSeq" id="XP_038284799.1">
    <property type="nucleotide sequence ID" value="XM_038428871.1"/>
</dbReference>
<dbReference type="RefSeq" id="XP_038284800.1">
    <property type="nucleotide sequence ID" value="XM_038428872.1"/>
</dbReference>
<dbReference type="RefSeq" id="XP_038311416.1">
    <property type="nucleotide sequence ID" value="XM_038455488.1"/>
</dbReference>
<dbReference type="RefSeq" id="XP_038311417.1">
    <property type="nucleotide sequence ID" value="XM_038455489.1"/>
</dbReference>
<dbReference type="RefSeq" id="XP_038311418.1">
    <property type="nucleotide sequence ID" value="XM_038455490.1"/>
</dbReference>
<dbReference type="RefSeq" id="XP_038423472.1">
    <property type="nucleotide sequence ID" value="XM_038567544.1"/>
</dbReference>
<dbReference type="RefSeq" id="XP_038423473.1">
    <property type="nucleotide sequence ID" value="XM_038567545.1"/>
</dbReference>
<dbReference type="RefSeq" id="XP_038423474.1">
    <property type="nucleotide sequence ID" value="XM_038567546.1"/>
</dbReference>
<dbReference type="RefSeq" id="XP_038423476.1">
    <property type="nucleotide sequence ID" value="XM_038567548.1"/>
</dbReference>
<dbReference type="RefSeq" id="XP_038423477.1">
    <property type="nucleotide sequence ID" value="XM_038567549.1"/>
</dbReference>
<dbReference type="RefSeq" id="XP_038423478.1">
    <property type="nucleotide sequence ID" value="XM_038567550.1"/>
</dbReference>
<dbReference type="SMR" id="A0A5F4BST2"/>
<dbReference type="CORUM" id="A0A5F4BST2"/>
<dbReference type="FunCoup" id="A0A5F4BST2">
    <property type="interactions" value="83"/>
</dbReference>
<dbReference type="STRING" id="9615.ENSCAFP00000044539"/>
<dbReference type="GlyCosmos" id="A0A5F4BST2">
    <property type="glycosylation" value="1 site, No reported glycans"/>
</dbReference>
<dbReference type="PaxDb" id="9615-ENSCAFP00000044539"/>
<dbReference type="Ensembl" id="ENSCAFT00000082784.2">
    <property type="protein sequence ID" value="ENSCAFP00000044539.1"/>
    <property type="gene ID" value="ENSCAFG00000049307.2"/>
</dbReference>
<dbReference type="Ensembl" id="ENSCAFT00030038046.1">
    <property type="protein sequence ID" value="ENSCAFP00030033190.1"/>
    <property type="gene ID" value="ENSCAFG00030020725.1"/>
</dbReference>
<dbReference type="Ensembl" id="ENSCAFT00040045568.1">
    <property type="protein sequence ID" value="ENSCAFP00040039782.1"/>
    <property type="gene ID" value="ENSCAFG00040024468.1"/>
</dbReference>
<dbReference type="Ensembl" id="ENSCAFT00845019111.1">
    <property type="protein sequence ID" value="ENSCAFP00845014929.1"/>
    <property type="gene ID" value="ENSCAFG00845010829.1"/>
</dbReference>
<dbReference type="GeneID" id="100855851"/>
<dbReference type="KEGG" id="cfa:100855851"/>
<dbReference type="CTD" id="92359"/>
<dbReference type="VEuPathDB" id="HostDB:ENSCAFG00845010829"/>
<dbReference type="GeneTree" id="ENSGT00950000183101"/>
<dbReference type="InParanoid" id="A0A5F4BST2"/>
<dbReference type="OrthoDB" id="9949034at2759"/>
<dbReference type="Proteomes" id="UP000002254">
    <property type="component" value="Chromosome 20"/>
</dbReference>
<dbReference type="Proteomes" id="UP000694429">
    <property type="component" value="Chromosome 20"/>
</dbReference>
<dbReference type="Proteomes" id="UP000694542">
    <property type="component" value="Chromosome 20"/>
</dbReference>
<dbReference type="Proteomes" id="UP000805418">
    <property type="component" value="Chromosome 20"/>
</dbReference>
<dbReference type="Bgee" id="ENSCAFG00000049307">
    <property type="expression patterns" value="Expressed in jejunum and 36 other cell types or tissues"/>
</dbReference>
<dbReference type="GO" id="GO:0016324">
    <property type="term" value="C:apical plasma membrane"/>
    <property type="evidence" value="ECO:0007669"/>
    <property type="project" value="UniProtKB-SubCell"/>
</dbReference>
<dbReference type="GO" id="GO:0005923">
    <property type="term" value="C:bicellular tight junction"/>
    <property type="evidence" value="ECO:0007669"/>
    <property type="project" value="UniProtKB-SubCell"/>
</dbReference>
<dbReference type="GO" id="GO:0035003">
    <property type="term" value="C:subapical complex"/>
    <property type="evidence" value="ECO:0007669"/>
    <property type="project" value="Ensembl"/>
</dbReference>
<dbReference type="GO" id="GO:0017124">
    <property type="term" value="F:SH3 domain binding"/>
    <property type="evidence" value="ECO:0007669"/>
    <property type="project" value="Ensembl"/>
</dbReference>
<dbReference type="GO" id="GO:1901890">
    <property type="term" value="P:positive regulation of cell junction assembly"/>
    <property type="evidence" value="ECO:0007669"/>
    <property type="project" value="Ensembl"/>
</dbReference>
<dbReference type="GO" id="GO:0072659">
    <property type="term" value="P:protein localization to plasma membrane"/>
    <property type="evidence" value="ECO:0007669"/>
    <property type="project" value="Ensembl"/>
</dbReference>
<feature type="signal peptide" evidence="3">
    <location>
        <begin position="1"/>
        <end position="26"/>
    </location>
</feature>
<feature type="chain" id="PRO_0000451439" description="Protein crumbs homolog 3" evidence="3">
    <location>
        <begin position="27"/>
        <end position="123"/>
    </location>
</feature>
<feature type="topological domain" description="Extracellular" evidence="7">
    <location>
        <begin position="27"/>
        <end position="59"/>
    </location>
</feature>
<feature type="transmembrane region" description="Helical" evidence="3">
    <location>
        <begin position="60"/>
        <end position="80"/>
    </location>
</feature>
<feature type="topological domain" description="Cytoplasmic" evidence="7">
    <location>
        <begin position="81"/>
        <end position="120"/>
    </location>
</feature>
<feature type="region of interest" description="Disordered" evidence="4">
    <location>
        <begin position="87"/>
        <end position="123"/>
    </location>
</feature>
<feature type="short sequence motif" description="PDZ-binding" evidence="7">
    <location>
        <begin position="119"/>
        <end position="123"/>
    </location>
</feature>
<feature type="compositionally biased region" description="Basic and acidic residues" evidence="4">
    <location>
        <begin position="96"/>
        <end position="117"/>
    </location>
</feature>
<feature type="glycosylation site" description="N-linked (GlcNAc...) asparagine" evidence="2">
    <location>
        <position position="36"/>
    </location>
</feature>
<evidence type="ECO:0000250" key="1">
    <source>
        <dbReference type="UniProtKB" id="Q8QZT4"/>
    </source>
</evidence>
<evidence type="ECO:0000250" key="2">
    <source>
        <dbReference type="UniProtKB" id="Q9BUF7"/>
    </source>
</evidence>
<evidence type="ECO:0000255" key="3"/>
<evidence type="ECO:0000256" key="4">
    <source>
        <dbReference type="SAM" id="MobiDB-lite"/>
    </source>
</evidence>
<evidence type="ECO:0000269" key="5">
    <source>
    </source>
</evidence>
<evidence type="ECO:0000269" key="6">
    <source>
    </source>
</evidence>
<evidence type="ECO:0000305" key="7"/>
<evidence type="ECO:0000312" key="8">
    <source>
        <dbReference type="Proteomes" id="UP000002254"/>
    </source>
</evidence>
<comment type="function">
    <text evidence="1 2">Involved in the establishment of cell polarity in mammalian epithelial cells (By similarity). Regulates the morphogenesis of tight junctions (By similarity). Involved in promoting phosphorylation and cytoplasmic retention of transcriptional coactivators YAP1 and WWTR1/TAZ which leads to suppression of TGFB1-dependent transcription of target genes such as CCN2/CTGF, SERPINE1/PAI1, SNAI1/SNAIL1 and SMAD7 (By similarity).</text>
</comment>
<comment type="subunit">
    <text evidence="2 5">Component of a complex composed of CRB3, PALS1 and PATJ (PubMed:12527193). Interacts (via C-terminus) with PALS1 (via PDZ domain) (By similarity). Interacts with PARD6A (By similarity). Interacts (via intracellular domain) with EPB41L5 (By similarity). Interacts with WDR83 (By similarity).</text>
</comment>
<comment type="subcellular location">
    <subcellularLocation>
        <location evidence="5 6">Apical cell membrane</location>
        <topology evidence="3">Single-pass type I membrane protein</topology>
    </subcellularLocation>
    <subcellularLocation>
        <location evidence="5">Cell junction</location>
        <location evidence="5">Tight junction</location>
    </subcellularLocation>
    <text evidence="2">Localizes primarily to the apical membrane with a small fraction in the upper part of tight junctions of epithelial cells.</text>
</comment>
<comment type="domain">
    <text evidence="2">The PDZ-binding motif is involved in the interactions with PARD6A and PALS1.</text>
</comment>
<accession>A0A5F4BST2</accession>
<sequence>MASPGLGLLLALGLPLLPARWGRAWGQTLDPHVNENGTITPSAPGSGSNGALSQEAITAIIVVFSLLAAVLLAVGLVLLLRKLREKRQTQGTYRPSSEEQFNHAAEARAPQDSKETVRGCLPI</sequence>
<keyword id="KW-0965">Cell junction</keyword>
<keyword id="KW-1003">Cell membrane</keyword>
<keyword id="KW-0325">Glycoprotein</keyword>
<keyword id="KW-0472">Membrane</keyword>
<keyword id="KW-1185">Reference proteome</keyword>
<keyword id="KW-0732">Signal</keyword>
<keyword id="KW-0796">Tight junction</keyword>
<keyword id="KW-0812">Transmembrane</keyword>
<keyword id="KW-1133">Transmembrane helix</keyword>